<feature type="chain" id="PRO_0000448414" description="Cytochrome P450 monooxygenase abl1">
    <location>
        <begin position="1"/>
        <end position="569"/>
    </location>
</feature>
<feature type="binding site" description="axial binding residue" evidence="1">
    <location>
        <position position="464"/>
    </location>
    <ligand>
        <name>heme</name>
        <dbReference type="ChEBI" id="CHEBI:30413"/>
    </ligand>
    <ligandPart>
        <name>Fe</name>
        <dbReference type="ChEBI" id="CHEBI:18248"/>
    </ligandPart>
</feature>
<accession>E5A7E1</accession>
<proteinExistence type="evidence at transcript level"/>
<comment type="function">
    <text evidence="2 3">Cytochrome P450 monooxygenase; part of the gene cluster that mediates the biosynthesis of abscisic acid (ABA), a phytohormone that acts antagonistically toward salicylic acid (SA), jasmonic acid (JA) and ethylene (ETH) signaling, to impede plant defense responses (PubMed:31034868). The first step of the pathway catalyzes the reaction from farnesyl diphosphate to alpha-ionylideneethane performed by the alpha-ionylideneethane synthase abl3 via a three-step reaction mechanism involving 2 neutral intermediates, beta-farnesene and allofarnesene (By similarity). The cytochrome P450 monooxygenase abl1 might then be involved in the conversion of alpha-ionylideneethane to alpha-ionylideneacetic acid (By similarity). Alpha-ionylideneacetic acid is further converted to abscisic acid in 2 steps involving the cytochrome P450 monooxygenase abl2 and the short-chain dehydrogenase/reductase abl4, via the intermediates 1'-deoxy-ABA or 1',4'-trans-diol-ABA, depending on the order of action of these 2 enzymes (By similarity). Abl2 is responsible for the hydroxylation of carbon atom C-1' and abl4 might be involved in the oxidation of the C-4' carbon atom (By similarity).</text>
</comment>
<comment type="cofactor">
    <cofactor evidence="1">
        <name>heme</name>
        <dbReference type="ChEBI" id="CHEBI:30413"/>
    </cofactor>
</comment>
<comment type="pathway">
    <text evidence="3">Hormone biosynthesis.</text>
</comment>
<comment type="induction">
    <text evidence="3">Expression is induced during the early biotrophic stage of development (PubMed:31034868). Expression is positively regulated by the ABA cluster-specific transcription regulator abl7 (PubMed:31034868).</text>
</comment>
<comment type="disruption phenotype">
    <text evidence="3">Impairs the production of abscisic acid (ABA) (PubMed:31034868). Does not affect sporulation, pycnidiospore germination nor fungal growth rates in vitro, and does not alter the pathogenicity of L.maculans (PubMed:31034868).</text>
</comment>
<comment type="similarity">
    <text evidence="5">Belongs to the cytochrome P450 family.</text>
</comment>
<sequence>MYCDSFFMSRLLSLAQLSGSSWSSICLVCVTSLVFWRIKIAVTQYIRLRHIPSPSIFAAVSYIWLARTTYSGKQYWIHRDLHRQHGPLVRIGPNEITTDDPEILKKIASSGSTYSRGTWYLTGRFNPYHDNLFTILDPFAHKKAKTRSMPAYLGRDTPGLEVIINDKVKQLISILQRRYLAVLPGQDPPLVDLGLISNYFTMDVITHLAFGHQVGYLQDEKDHYNFLGSVRKLWPQMSTSADVPWIRNILFSRPVLRFLGPKHTDKKGFGALMGAAKQHVDRRFDSGEERKHDMLESLMKRGFTRQECEIEGLFLLLSGTESTACAIRQILVHVITAPSVYAKLKQEIDSTCQGRGISYPIQLAEAKRLPYLQAVIYEGIRMRPPLLGLFPKVVPEPGETFHGQFIPAGTSICTNGSSLLRSKSLFGADADLYNPGRFMELSKERREEMERNVELAFGHGQWMCAGKTIAFMELNKVVFEKHCQFFRAFDMQLHSPLKPCEVESYAGLIAKPPAKSSDLSMISRVTDMSRGINPCYRYPPQYRTHLKTHMLNVPSGSNFIRMPIVLPST</sequence>
<dbReference type="EC" id="1.-.-.-" evidence="6"/>
<dbReference type="EMBL" id="FP929136">
    <property type="protein sequence ID" value="CBX99536.1"/>
    <property type="molecule type" value="Genomic_DNA"/>
</dbReference>
<dbReference type="RefSeq" id="XP_003843015.1">
    <property type="nucleotide sequence ID" value="XM_003842967.1"/>
</dbReference>
<dbReference type="SMR" id="E5A7E1"/>
<dbReference type="STRING" id="985895.E5A7E1"/>
<dbReference type="EnsemblFungi" id="CBX99536">
    <property type="protein sequence ID" value="CBX99536"/>
    <property type="gene ID" value="LEMA_P087750.1"/>
</dbReference>
<dbReference type="VEuPathDB" id="FungiDB:LEMA_P087750.1"/>
<dbReference type="eggNOG" id="KOG0156">
    <property type="taxonomic scope" value="Eukaryota"/>
</dbReference>
<dbReference type="HOGENOM" id="CLU_001570_14_0_1"/>
<dbReference type="InParanoid" id="E5A7E1"/>
<dbReference type="OMA" id="NPYHETM"/>
<dbReference type="OrthoDB" id="3934656at2759"/>
<dbReference type="PHI-base" id="PHI:10272"/>
<dbReference type="Proteomes" id="UP000002668">
    <property type="component" value="Genome"/>
</dbReference>
<dbReference type="GO" id="GO:0020037">
    <property type="term" value="F:heme binding"/>
    <property type="evidence" value="ECO:0007669"/>
    <property type="project" value="InterPro"/>
</dbReference>
<dbReference type="GO" id="GO:0005506">
    <property type="term" value="F:iron ion binding"/>
    <property type="evidence" value="ECO:0007669"/>
    <property type="project" value="InterPro"/>
</dbReference>
<dbReference type="GO" id="GO:0004497">
    <property type="term" value="F:monooxygenase activity"/>
    <property type="evidence" value="ECO:0007669"/>
    <property type="project" value="UniProtKB-KW"/>
</dbReference>
<dbReference type="GO" id="GO:0016705">
    <property type="term" value="F:oxidoreductase activity, acting on paired donors, with incorporation or reduction of molecular oxygen"/>
    <property type="evidence" value="ECO:0007669"/>
    <property type="project" value="InterPro"/>
</dbReference>
<dbReference type="CDD" id="cd11060">
    <property type="entry name" value="CYP57A1-like"/>
    <property type="match status" value="1"/>
</dbReference>
<dbReference type="Gene3D" id="1.10.630.10">
    <property type="entry name" value="Cytochrome P450"/>
    <property type="match status" value="1"/>
</dbReference>
<dbReference type="InterPro" id="IPR001128">
    <property type="entry name" value="Cyt_P450"/>
</dbReference>
<dbReference type="InterPro" id="IPR036396">
    <property type="entry name" value="Cyt_P450_sf"/>
</dbReference>
<dbReference type="InterPro" id="IPR050121">
    <property type="entry name" value="Cytochrome_P450_monoxygenase"/>
</dbReference>
<dbReference type="PANTHER" id="PTHR24305">
    <property type="entry name" value="CYTOCHROME P450"/>
    <property type="match status" value="1"/>
</dbReference>
<dbReference type="PANTHER" id="PTHR24305:SF77">
    <property type="entry name" value="CYTOCHROME P450 MONOOXYGENASE"/>
    <property type="match status" value="1"/>
</dbReference>
<dbReference type="Pfam" id="PF00067">
    <property type="entry name" value="p450"/>
    <property type="match status" value="1"/>
</dbReference>
<dbReference type="PRINTS" id="PR00385">
    <property type="entry name" value="P450"/>
</dbReference>
<dbReference type="SUPFAM" id="SSF48264">
    <property type="entry name" value="Cytochrome P450"/>
    <property type="match status" value="1"/>
</dbReference>
<organism>
    <name type="scientific">Leptosphaeria maculans (strain JN3 / isolate v23.1.3 / race Av1-4-5-6-7-8)</name>
    <name type="common">Blackleg fungus</name>
    <name type="synonym">Phoma lingam</name>
    <dbReference type="NCBI Taxonomy" id="985895"/>
    <lineage>
        <taxon>Eukaryota</taxon>
        <taxon>Fungi</taxon>
        <taxon>Dikarya</taxon>
        <taxon>Ascomycota</taxon>
        <taxon>Pezizomycotina</taxon>
        <taxon>Dothideomycetes</taxon>
        <taxon>Pleosporomycetidae</taxon>
        <taxon>Pleosporales</taxon>
        <taxon>Pleosporineae</taxon>
        <taxon>Leptosphaeriaceae</taxon>
        <taxon>Plenodomus</taxon>
        <taxon>Plenodomus lingam/Leptosphaeria maculans species complex</taxon>
    </lineage>
</organism>
<protein>
    <recommendedName>
        <fullName evidence="4">Cytochrome P450 monooxygenase abl1</fullName>
        <ecNumber evidence="6">1.-.-.-</ecNumber>
    </recommendedName>
    <alternativeName>
        <fullName evidence="4">Abscisic acid biosynthesis cluster protein 1</fullName>
    </alternativeName>
</protein>
<gene>
    <name evidence="4" type="primary">abl1</name>
    <name type="ORF">LEMA_P087750.1</name>
</gene>
<keyword id="KW-0349">Heme</keyword>
<keyword id="KW-0408">Iron</keyword>
<keyword id="KW-0479">Metal-binding</keyword>
<keyword id="KW-0503">Monooxygenase</keyword>
<keyword id="KW-0560">Oxidoreductase</keyword>
<keyword id="KW-1185">Reference proteome</keyword>
<keyword id="KW-0843">Virulence</keyword>
<evidence type="ECO:0000250" key="1">
    <source>
        <dbReference type="UniProtKB" id="P04798"/>
    </source>
</evidence>
<evidence type="ECO:0000250" key="2">
    <source>
        <dbReference type="UniProtKB" id="Q6H9H9"/>
    </source>
</evidence>
<evidence type="ECO:0000269" key="3">
    <source>
    </source>
</evidence>
<evidence type="ECO:0000303" key="4">
    <source>
    </source>
</evidence>
<evidence type="ECO:0000305" key="5"/>
<evidence type="ECO:0000305" key="6">
    <source>
    </source>
</evidence>
<name>ABL1_LEPMJ</name>
<reference key="1">
    <citation type="journal article" date="2011" name="Nat. Commun.">
        <title>Effector diversification within compartments of the Leptosphaeria maculans genome affected by Repeat-Induced Point mutations.</title>
        <authorList>
            <person name="Rouxel T."/>
            <person name="Grandaubert J."/>
            <person name="Hane J.K."/>
            <person name="Hoede C."/>
            <person name="van de Wouw A.P."/>
            <person name="Couloux A."/>
            <person name="Dominguez V."/>
            <person name="Anthouard V."/>
            <person name="Bally P."/>
            <person name="Bourras S."/>
            <person name="Cozijnsen A.J."/>
            <person name="Ciuffetti L.M."/>
            <person name="Degrave A."/>
            <person name="Dilmaghani A."/>
            <person name="Duret L."/>
            <person name="Fudal I."/>
            <person name="Goodwin S.B."/>
            <person name="Gout L."/>
            <person name="Glaser N."/>
            <person name="Linglin J."/>
            <person name="Kema G.H.J."/>
            <person name="Lapalu N."/>
            <person name="Lawrence C.B."/>
            <person name="May K."/>
            <person name="Meyer M."/>
            <person name="Ollivier B."/>
            <person name="Poulain J."/>
            <person name="Schoch C.L."/>
            <person name="Simon A."/>
            <person name="Spatafora J.W."/>
            <person name="Stachowiak A."/>
            <person name="Turgeon B.G."/>
            <person name="Tyler B.M."/>
            <person name="Vincent D."/>
            <person name="Weissenbach J."/>
            <person name="Amselem J."/>
            <person name="Quesneville H."/>
            <person name="Oliver R.P."/>
            <person name="Wincker P."/>
            <person name="Balesdent M.-H."/>
            <person name="Howlett B.J."/>
        </authorList>
    </citation>
    <scope>NUCLEOTIDE SEQUENCE [LARGE SCALE GENOMIC DNA]</scope>
    <source>
        <strain>JN3 / isolate v23.1.3 / race Av1-4-5-6-7-8</strain>
    </source>
</reference>
<reference key="2">
    <citation type="journal article" date="2019" name="Fungal Genet. Biol.">
        <title>Identification of a gene cluster for the synthesis of the plant hormone abscisic acid in the plant pathogen Leptosphaeria maculans.</title>
        <authorList>
            <person name="Darma R."/>
            <person name="Lutz A."/>
            <person name="Elliott C.E."/>
            <person name="Idnurm A."/>
        </authorList>
    </citation>
    <scope>IDENTIFICATION</scope>
    <scope>INDUCTION</scope>
    <scope>FUNCTION</scope>
    <scope>DISRUPTION PHENOTYPE</scope>
    <scope>PATHWAY</scope>
</reference>